<proteinExistence type="inferred from homology"/>
<comment type="function">
    <text evidence="1">Involved in DNA transformation; mediates the nuclear uptake of single-stranded DNA copies of the transferred DNA (T-DNA) element. Binds single-stranded but not double-stranded DNA regardless of nucleotide sequence composition (By similarity).</text>
</comment>
<comment type="subunit">
    <text evidence="1">Forms heterodimers with the chaperone protein virE1 that prevent virE2 anarchic homopolymerization. Interacts with host VIP1 that mediates its translocation to the host nucleus and host VIP2 that promotes T-DNA integration into the host genome. Forms a complex made of VirE2, host VIP1 and VIP2 and single-stranded DNA (ssDNA). Forms a complex made of virE2 and host proteins VIP1 and VBF (By similarity).</text>
</comment>
<comment type="subcellular location">
    <subcellularLocation>
        <location evidence="1">Secreted</location>
    </subcellularLocation>
    <subcellularLocation>
        <location evidence="1">Host nucleus</location>
    </subcellularLocation>
    <text evidence="1">In infected cells, it is found in the nucleus.</text>
</comment>
<comment type="induction">
    <text evidence="1">Targeted to degradation by the host proteasome by VBF and Agrobacterium virF in SCF(VBF) and SCF(COI1) E3 ubiquitin ligase complexes after mediating T-DNA translocation to the nucleus.</text>
</comment>
<protein>
    <recommendedName>
        <fullName>Single-strand DNA-binding protein</fullName>
    </recommendedName>
</protein>
<gene>
    <name type="primary">virE2</name>
</gene>
<geneLocation type="plasmid">
    <name>pTi15955</name>
</geneLocation>
<evidence type="ECO:0000250" key="1"/>
<evidence type="ECO:0000256" key="2">
    <source>
        <dbReference type="SAM" id="MobiDB-lite"/>
    </source>
</evidence>
<accession>P0A3W9</accession>
<accession>P07544</accession>
<accession>Q9JN10</accession>
<sequence>MDLSGNEKSRPWKKANVSSSTISDIQMTNGENLESGSPTRTEVLSPRLDDGSVDSSSSLYSGSEHGNQAEIQKELSALFSNMSLPGNDRRPDEYILVRQTGQDAFTGIAKGNLDHMPTKAEFNACCRLYRDGAGNYYPPPLAFDKISVPAQLEETWGMMEAKERNKLRFQYKLDVWNHAHADMGITGTEIFYQTDKNIKLDRNYKLRPEDRYVQTERYGRREIQKRYQHELQAGSLLPDIMIKTPKNDIHFVYRFAGDNYANKQFSEFEHTVKRRYGGETEIKLKSKSGIMHDSKYLESWERGSADIRFAEFVGENRAHNRQFPTATVNMGQQPDGQGGLTRDRHVSVEFLMQSAPNSPWAQALKKGELWDRVQLLARDGNRYLSPHRLEYSDPEHFTELMNRVGLPASMGRQSHAASIKFEKFDAQAAVIVINGPELRDIHDLSPENLQNVSTKDVIVADRNENGQRTGTYTSVAEYERLQLRLPADAAGVLGEAADKYSRDFVRPEPASRPISDSRRIYESRPRSQSVNSF</sequence>
<reference key="1">
    <citation type="journal article" date="2000" name="J. Exp. Bot.">
        <title>Sequence analysis of the vir-region from Agrobacterium tumefaciens octopine Ti plasmid pTi15955.</title>
        <authorList>
            <person name="Schrammeijer B."/>
            <person name="Beijersbergen A."/>
            <person name="Idler K.B."/>
            <person name="Melchers L.S."/>
            <person name="Thompson D.V."/>
            <person name="Hooykaas P.J.J."/>
        </authorList>
    </citation>
    <scope>NUCLEOTIDE SEQUENCE [GENOMIC DNA]</scope>
</reference>
<dbReference type="EMBL" id="X06826">
    <property type="protein sequence ID" value="CAC15175.1"/>
    <property type="molecule type" value="Genomic_DNA"/>
</dbReference>
<dbReference type="RefSeq" id="NP_059819.1">
    <property type="nucleotide sequence ID" value="NC_002377.1"/>
</dbReference>
<dbReference type="SMR" id="P0A3W9"/>
<dbReference type="IntAct" id="P0A3W9">
    <property type="interactions" value="1"/>
</dbReference>
<dbReference type="GO" id="GO:0005576">
    <property type="term" value="C:extracellular region"/>
    <property type="evidence" value="ECO:0007669"/>
    <property type="project" value="UniProtKB-SubCell"/>
</dbReference>
<dbReference type="GO" id="GO:0042025">
    <property type="term" value="C:host cell nucleus"/>
    <property type="evidence" value="ECO:0000250"/>
    <property type="project" value="UniProtKB"/>
</dbReference>
<dbReference type="GO" id="GO:0003677">
    <property type="term" value="F:DNA binding"/>
    <property type="evidence" value="ECO:0000250"/>
    <property type="project" value="UniProtKB"/>
</dbReference>
<dbReference type="GO" id="GO:0009294">
    <property type="term" value="P:DNA-mediated transformation"/>
    <property type="evidence" value="ECO:0000250"/>
    <property type="project" value="UniProtKB"/>
</dbReference>
<dbReference type="InterPro" id="IPR009868">
    <property type="entry name" value="VirE2"/>
</dbReference>
<dbReference type="NCBIfam" id="NF010442">
    <property type="entry name" value="PRK13868.1"/>
    <property type="match status" value="1"/>
</dbReference>
<dbReference type="Pfam" id="PF07229">
    <property type="entry name" value="VirE2"/>
    <property type="match status" value="1"/>
</dbReference>
<organism>
    <name type="scientific">Agrobacterium tumefaciens (strain 15955)</name>
    <dbReference type="NCBI Taxonomy" id="190386"/>
    <lineage>
        <taxon>Bacteria</taxon>
        <taxon>Pseudomonadati</taxon>
        <taxon>Pseudomonadota</taxon>
        <taxon>Alphaproteobacteria</taxon>
        <taxon>Hyphomicrobiales</taxon>
        <taxon>Rhizobiaceae</taxon>
        <taxon>Rhizobium/Agrobacterium group</taxon>
        <taxon>Agrobacterium</taxon>
        <taxon>Agrobacterium tumefaciens complex</taxon>
    </lineage>
</organism>
<name>VIRE2_AGRT9</name>
<keyword id="KW-0192">Crown gall tumor</keyword>
<keyword id="KW-0238">DNA-binding</keyword>
<keyword id="KW-1048">Host nucleus</keyword>
<keyword id="KW-0614">Plasmid</keyword>
<keyword id="KW-0964">Secreted</keyword>
<keyword id="KW-0843">Virulence</keyword>
<feature type="chain" id="PRO_0000065867" description="Single-strand DNA-binding protein">
    <location>
        <begin position="1"/>
        <end position="533"/>
    </location>
</feature>
<feature type="region of interest" description="Disordered" evidence="2">
    <location>
        <begin position="1"/>
        <end position="67"/>
    </location>
</feature>
<feature type="region of interest" description="Disordered" evidence="2">
    <location>
        <begin position="504"/>
        <end position="533"/>
    </location>
</feature>
<feature type="compositionally biased region" description="Basic and acidic residues" evidence="2">
    <location>
        <begin position="1"/>
        <end position="10"/>
    </location>
</feature>
<feature type="compositionally biased region" description="Polar residues" evidence="2">
    <location>
        <begin position="16"/>
        <end position="42"/>
    </location>
</feature>
<feature type="compositionally biased region" description="Low complexity" evidence="2">
    <location>
        <begin position="53"/>
        <end position="63"/>
    </location>
</feature>
<feature type="compositionally biased region" description="Basic and acidic residues" evidence="2">
    <location>
        <begin position="515"/>
        <end position="525"/>
    </location>
</feature>